<comment type="similarity">
    <text evidence="1">Belongs to the bacterial ribosomal protein bL33 family.</text>
</comment>
<evidence type="ECO:0000255" key="1">
    <source>
        <dbReference type="HAMAP-Rule" id="MF_00294"/>
    </source>
</evidence>
<evidence type="ECO:0000305" key="2"/>
<keyword id="KW-0687">Ribonucleoprotein</keyword>
<keyword id="KW-0689">Ribosomal protein</keyword>
<protein>
    <recommendedName>
        <fullName evidence="1">Large ribosomal subunit protein bL33</fullName>
    </recommendedName>
    <alternativeName>
        <fullName evidence="2">50S ribosomal protein L33</fullName>
    </alternativeName>
</protein>
<gene>
    <name evidence="1" type="primary">rpmG</name>
    <name type="ordered locus">BamMC406_2421</name>
</gene>
<dbReference type="EMBL" id="CP001025">
    <property type="protein sequence ID" value="ACB64899.1"/>
    <property type="molecule type" value="Genomic_DNA"/>
</dbReference>
<dbReference type="RefSeq" id="WP_006478046.1">
    <property type="nucleotide sequence ID" value="NC_010551.1"/>
</dbReference>
<dbReference type="SMR" id="B1YV95"/>
<dbReference type="GeneID" id="98107655"/>
<dbReference type="KEGG" id="bac:BamMC406_2421"/>
<dbReference type="HOGENOM" id="CLU_190949_1_1_4"/>
<dbReference type="OrthoDB" id="21586at2"/>
<dbReference type="Proteomes" id="UP000001680">
    <property type="component" value="Chromosome 1"/>
</dbReference>
<dbReference type="GO" id="GO:0022625">
    <property type="term" value="C:cytosolic large ribosomal subunit"/>
    <property type="evidence" value="ECO:0007669"/>
    <property type="project" value="TreeGrafter"/>
</dbReference>
<dbReference type="GO" id="GO:0003735">
    <property type="term" value="F:structural constituent of ribosome"/>
    <property type="evidence" value="ECO:0007669"/>
    <property type="project" value="InterPro"/>
</dbReference>
<dbReference type="GO" id="GO:0006412">
    <property type="term" value="P:translation"/>
    <property type="evidence" value="ECO:0007669"/>
    <property type="project" value="UniProtKB-UniRule"/>
</dbReference>
<dbReference type="FunFam" id="2.20.28.120:FF:000001">
    <property type="entry name" value="50S ribosomal protein L33"/>
    <property type="match status" value="1"/>
</dbReference>
<dbReference type="Gene3D" id="2.20.28.120">
    <property type="entry name" value="Ribosomal protein L33"/>
    <property type="match status" value="1"/>
</dbReference>
<dbReference type="HAMAP" id="MF_00294">
    <property type="entry name" value="Ribosomal_bL33"/>
    <property type="match status" value="1"/>
</dbReference>
<dbReference type="InterPro" id="IPR001705">
    <property type="entry name" value="Ribosomal_bL33"/>
</dbReference>
<dbReference type="InterPro" id="IPR018264">
    <property type="entry name" value="Ribosomal_bL33_CS"/>
</dbReference>
<dbReference type="InterPro" id="IPR038584">
    <property type="entry name" value="Ribosomal_bL33_sf"/>
</dbReference>
<dbReference type="InterPro" id="IPR011332">
    <property type="entry name" value="Ribosomal_zn-bd"/>
</dbReference>
<dbReference type="NCBIfam" id="NF001860">
    <property type="entry name" value="PRK00595.1"/>
    <property type="match status" value="1"/>
</dbReference>
<dbReference type="NCBIfam" id="TIGR01023">
    <property type="entry name" value="rpmG_bact"/>
    <property type="match status" value="1"/>
</dbReference>
<dbReference type="PANTHER" id="PTHR15238">
    <property type="entry name" value="54S RIBOSOMAL PROTEIN L39, MITOCHONDRIAL"/>
    <property type="match status" value="1"/>
</dbReference>
<dbReference type="PANTHER" id="PTHR15238:SF1">
    <property type="entry name" value="LARGE RIBOSOMAL SUBUNIT PROTEIN BL33M"/>
    <property type="match status" value="1"/>
</dbReference>
<dbReference type="Pfam" id="PF00471">
    <property type="entry name" value="Ribosomal_L33"/>
    <property type="match status" value="1"/>
</dbReference>
<dbReference type="SUPFAM" id="SSF57829">
    <property type="entry name" value="Zn-binding ribosomal proteins"/>
    <property type="match status" value="1"/>
</dbReference>
<dbReference type="PROSITE" id="PS00582">
    <property type="entry name" value="RIBOSOMAL_L33"/>
    <property type="match status" value="1"/>
</dbReference>
<name>RL33_BURA4</name>
<feature type="chain" id="PRO_1000115101" description="Large ribosomal subunit protein bL33">
    <location>
        <begin position="1"/>
        <end position="55"/>
    </location>
</feature>
<accession>B1YV95</accession>
<organism>
    <name type="scientific">Burkholderia ambifaria (strain MC40-6)</name>
    <dbReference type="NCBI Taxonomy" id="398577"/>
    <lineage>
        <taxon>Bacteria</taxon>
        <taxon>Pseudomonadati</taxon>
        <taxon>Pseudomonadota</taxon>
        <taxon>Betaproteobacteria</taxon>
        <taxon>Burkholderiales</taxon>
        <taxon>Burkholderiaceae</taxon>
        <taxon>Burkholderia</taxon>
        <taxon>Burkholderia cepacia complex</taxon>
    </lineage>
</organism>
<proteinExistence type="inferred from homology"/>
<reference key="1">
    <citation type="submission" date="2008-04" db="EMBL/GenBank/DDBJ databases">
        <title>Complete sequence of chromosome 1 of Burkholderia ambifaria MC40-6.</title>
        <authorList>
            <person name="Copeland A."/>
            <person name="Lucas S."/>
            <person name="Lapidus A."/>
            <person name="Glavina del Rio T."/>
            <person name="Dalin E."/>
            <person name="Tice H."/>
            <person name="Pitluck S."/>
            <person name="Chain P."/>
            <person name="Malfatti S."/>
            <person name="Shin M."/>
            <person name="Vergez L."/>
            <person name="Lang D."/>
            <person name="Schmutz J."/>
            <person name="Larimer F."/>
            <person name="Land M."/>
            <person name="Hauser L."/>
            <person name="Kyrpides N."/>
            <person name="Lykidis A."/>
            <person name="Ramette A."/>
            <person name="Konstantinidis K."/>
            <person name="Tiedje J."/>
            <person name="Richardson P."/>
        </authorList>
    </citation>
    <scope>NUCLEOTIDE SEQUENCE [LARGE SCALE GENOMIC DNA]</scope>
    <source>
        <strain>MC40-6</strain>
    </source>
</reference>
<sequence>MAKGARDKIKLESTAGTGHFYTTTKNKRNMPEKMAIKKFDPVVRKHVEYKETKIK</sequence>